<reference key="1">
    <citation type="journal article" date="2008" name="PLoS Genet.">
        <title>Genomic islands in the pathogenic filamentous fungus Aspergillus fumigatus.</title>
        <authorList>
            <person name="Fedorova N.D."/>
            <person name="Khaldi N."/>
            <person name="Joardar V.S."/>
            <person name="Maiti R."/>
            <person name="Amedeo P."/>
            <person name="Anderson M.J."/>
            <person name="Crabtree J."/>
            <person name="Silva J.C."/>
            <person name="Badger J.H."/>
            <person name="Albarraq A."/>
            <person name="Angiuoli S."/>
            <person name="Bussey H."/>
            <person name="Bowyer P."/>
            <person name="Cotty P.J."/>
            <person name="Dyer P.S."/>
            <person name="Egan A."/>
            <person name="Galens K."/>
            <person name="Fraser-Liggett C.M."/>
            <person name="Haas B.J."/>
            <person name="Inman J.M."/>
            <person name="Kent R."/>
            <person name="Lemieux S."/>
            <person name="Malavazi I."/>
            <person name="Orvis J."/>
            <person name="Roemer T."/>
            <person name="Ronning C.M."/>
            <person name="Sundaram J.P."/>
            <person name="Sutton G."/>
            <person name="Turner G."/>
            <person name="Venter J.C."/>
            <person name="White O.R."/>
            <person name="Whitty B.R."/>
            <person name="Youngman P."/>
            <person name="Wolfe K.H."/>
            <person name="Goldman G.H."/>
            <person name="Wortman J.R."/>
            <person name="Jiang B."/>
            <person name="Denning D.W."/>
            <person name="Nierman W.C."/>
        </authorList>
    </citation>
    <scope>NUCLEOTIDE SEQUENCE [LARGE SCALE GENOMIC DNA]</scope>
    <source>
        <strain>CBS 144.89 / FGSC A1163 / CEA10</strain>
    </source>
</reference>
<proteinExistence type="inferred from homology"/>
<comment type="function">
    <text evidence="1">Involved in the import of GDP-mannose from the cytoplasm into the Golgi lumen.</text>
</comment>
<comment type="subunit">
    <text evidence="1">Homooligomer.</text>
</comment>
<comment type="subcellular location">
    <subcellularLocation>
        <location evidence="1">Golgi apparatus membrane</location>
        <topology evidence="1">Multi-pass membrane protein</topology>
    </subcellularLocation>
    <subcellularLocation>
        <location evidence="1">Cytoplasmic vesicle membrane</location>
        <topology evidence="1">Multi-pass membrane protein</topology>
    </subcellularLocation>
    <subcellularLocation>
        <location evidence="1">Endoplasmic reticulum membrane</location>
        <topology evidence="1">Multi-pass membrane protein</topology>
    </subcellularLocation>
</comment>
<comment type="similarity">
    <text evidence="4">Belongs to the TPT transporter family. SLC35D subfamily.</text>
</comment>
<name>GMT_ASPFC</name>
<dbReference type="EMBL" id="DS499597">
    <property type="protein sequence ID" value="EDP51325.1"/>
    <property type="molecule type" value="Genomic_DNA"/>
</dbReference>
<dbReference type="SMR" id="B0Y384"/>
<dbReference type="EnsemblFungi" id="EDP51325">
    <property type="protein sequence ID" value="EDP51325"/>
    <property type="gene ID" value="AFUB_053290"/>
</dbReference>
<dbReference type="VEuPathDB" id="FungiDB:AFUB_053290"/>
<dbReference type="HOGENOM" id="CLU_025360_1_2_1"/>
<dbReference type="OrthoDB" id="83252at5052"/>
<dbReference type="PhylomeDB" id="B0Y384"/>
<dbReference type="Proteomes" id="UP000001699">
    <property type="component" value="Unassembled WGS sequence"/>
</dbReference>
<dbReference type="GO" id="GO:0030659">
    <property type="term" value="C:cytoplasmic vesicle membrane"/>
    <property type="evidence" value="ECO:0007669"/>
    <property type="project" value="UniProtKB-SubCell"/>
</dbReference>
<dbReference type="GO" id="GO:0005789">
    <property type="term" value="C:endoplasmic reticulum membrane"/>
    <property type="evidence" value="ECO:0007669"/>
    <property type="project" value="UniProtKB-SubCell"/>
</dbReference>
<dbReference type="GO" id="GO:0000139">
    <property type="term" value="C:Golgi membrane"/>
    <property type="evidence" value="ECO:0007669"/>
    <property type="project" value="UniProtKB-SubCell"/>
</dbReference>
<dbReference type="GO" id="GO:0005458">
    <property type="term" value="F:GDP-mannose transmembrane transporter activity"/>
    <property type="evidence" value="ECO:0007669"/>
    <property type="project" value="EnsemblFungi"/>
</dbReference>
<dbReference type="InterPro" id="IPR013657">
    <property type="entry name" value="SCL35B1-4/HUT1"/>
</dbReference>
<dbReference type="InterPro" id="IPR050186">
    <property type="entry name" value="TPT_transporter"/>
</dbReference>
<dbReference type="NCBIfam" id="TIGR00803">
    <property type="entry name" value="nst"/>
    <property type="match status" value="1"/>
</dbReference>
<dbReference type="PANTHER" id="PTHR11132">
    <property type="entry name" value="SOLUTE CARRIER FAMILY 35"/>
    <property type="match status" value="1"/>
</dbReference>
<dbReference type="Pfam" id="PF08449">
    <property type="entry name" value="UAA"/>
    <property type="match status" value="1"/>
</dbReference>
<dbReference type="SUPFAM" id="SSF103481">
    <property type="entry name" value="Multidrug resistance efflux transporter EmrE"/>
    <property type="match status" value="1"/>
</dbReference>
<organism>
    <name type="scientific">Aspergillus fumigatus (strain CBS 144.89 / FGSC A1163 / CEA10)</name>
    <name type="common">Neosartorya fumigata</name>
    <dbReference type="NCBI Taxonomy" id="451804"/>
    <lineage>
        <taxon>Eukaryota</taxon>
        <taxon>Fungi</taxon>
        <taxon>Dikarya</taxon>
        <taxon>Ascomycota</taxon>
        <taxon>Pezizomycotina</taxon>
        <taxon>Eurotiomycetes</taxon>
        <taxon>Eurotiomycetidae</taxon>
        <taxon>Eurotiales</taxon>
        <taxon>Aspergillaceae</taxon>
        <taxon>Aspergillus</taxon>
        <taxon>Aspergillus subgen. Fumigati</taxon>
    </lineage>
</organism>
<gene>
    <name type="primary">gmt1</name>
    <name type="synonym">vrg4</name>
    <name type="ORF">AFUB_053290</name>
</gene>
<evidence type="ECO:0000250" key="1"/>
<evidence type="ECO:0000255" key="2"/>
<evidence type="ECO:0000256" key="3">
    <source>
        <dbReference type="SAM" id="MobiDB-lite"/>
    </source>
</evidence>
<evidence type="ECO:0000305" key="4"/>
<protein>
    <recommendedName>
        <fullName>GDP-mannose transporter</fullName>
        <shortName>GMT</shortName>
    </recommendedName>
</protein>
<feature type="chain" id="PRO_0000333510" description="GDP-mannose transporter">
    <location>
        <begin position="1"/>
        <end position="382"/>
    </location>
</feature>
<feature type="topological domain" description="Cytoplasmic" evidence="1">
    <location>
        <begin position="1"/>
        <end position="40"/>
    </location>
</feature>
<feature type="transmembrane region" description="Helical" evidence="2">
    <location>
        <begin position="41"/>
        <end position="61"/>
    </location>
</feature>
<feature type="topological domain" description="Lumenal" evidence="1">
    <location>
        <begin position="62"/>
        <end position="71"/>
    </location>
</feature>
<feature type="transmembrane region" description="Helical" evidence="2">
    <location>
        <begin position="72"/>
        <end position="92"/>
    </location>
</feature>
<feature type="topological domain" description="Cytoplasmic" evidence="1">
    <location>
        <begin position="93"/>
        <end position="110"/>
    </location>
</feature>
<feature type="transmembrane region" description="Helical" evidence="2">
    <location>
        <begin position="111"/>
        <end position="127"/>
    </location>
</feature>
<feature type="topological domain" description="Lumenal" evidence="1">
    <location>
        <begin position="128"/>
        <end position="134"/>
    </location>
</feature>
<feature type="transmembrane region" description="Helical" evidence="2">
    <location>
        <begin position="135"/>
        <end position="151"/>
    </location>
</feature>
<feature type="topological domain" description="Cytoplasmic" evidence="1">
    <location>
        <begin position="152"/>
        <end position="160"/>
    </location>
</feature>
<feature type="transmembrane region" description="Helical" evidence="2">
    <location>
        <begin position="161"/>
        <end position="182"/>
    </location>
</feature>
<feature type="topological domain" description="Lumenal" evidence="1">
    <location>
        <begin position="183"/>
        <end position="200"/>
    </location>
</feature>
<feature type="transmembrane region" description="Helical" evidence="2">
    <location>
        <begin position="201"/>
        <end position="221"/>
    </location>
</feature>
<feature type="topological domain" description="Cytoplasmic" evidence="1">
    <location>
        <begin position="222"/>
        <end position="233"/>
    </location>
</feature>
<feature type="transmembrane region" description="Helical" evidence="2">
    <location>
        <begin position="234"/>
        <end position="254"/>
    </location>
</feature>
<feature type="topological domain" description="Lumenal" evidence="1">
    <location>
        <begin position="255"/>
        <end position="274"/>
    </location>
</feature>
<feature type="transmembrane region" description="Helical" evidence="2">
    <location>
        <begin position="275"/>
        <end position="295"/>
    </location>
</feature>
<feature type="topological domain" description="Cytoplasmic" evidence="1">
    <location>
        <begin position="296"/>
        <end position="303"/>
    </location>
</feature>
<feature type="transmembrane region" description="Helical" evidence="2">
    <location>
        <begin position="304"/>
        <end position="324"/>
    </location>
</feature>
<feature type="topological domain" description="Lumenal" evidence="1">
    <location>
        <begin position="325"/>
        <end position="327"/>
    </location>
</feature>
<feature type="transmembrane region" description="Helical" evidence="2">
    <location>
        <begin position="328"/>
        <end position="348"/>
    </location>
</feature>
<feature type="topological domain" description="Cytoplasmic" evidence="1">
    <location>
        <begin position="349"/>
        <end position="382"/>
    </location>
</feature>
<feature type="region of interest" description="Disordered" evidence="3">
    <location>
        <begin position="358"/>
        <end position="382"/>
    </location>
</feature>
<feature type="compositionally biased region" description="Polar residues" evidence="3">
    <location>
        <begin position="367"/>
        <end position="382"/>
    </location>
</feature>
<keyword id="KW-0968">Cytoplasmic vesicle</keyword>
<keyword id="KW-0256">Endoplasmic reticulum</keyword>
<keyword id="KW-0333">Golgi apparatus</keyword>
<keyword id="KW-0472">Membrane</keyword>
<keyword id="KW-0762">Sugar transport</keyword>
<keyword id="KW-0812">Transmembrane</keyword>
<keyword id="KW-1133">Transmembrane helix</keyword>
<keyword id="KW-0813">Transport</keyword>
<accession>B0Y384</accession>
<sequence length="382" mass="41858">MADDKKTNEYTIEMDKLDHGNKDFEAPAPAVRPRGPPVAQLANNPILPVLAYCGSSILMTVMNKYVLSGRDFNLNFFLLCVQSIVCIVAIQTCKVSKLITYRDFNSDEAKKWFPITLLLIGMIYTGSKALQYLSIPVYTIFKNLTIILIAYGEVLWFGGSVTGLTLFSFGLMVLSSIIAAWADIKHAVESSGDATAKVSTLNAGYIWMLINCLCTSSYVLGMRKRIKLTNFKDFDTMFYNNLLSIPVLLVLTFLMEDWSSANIARNFPSTDRNGILFAMILSGLSSVFISYTSAWCVRVTSSTTYSMVGALNKLPIALSGLIFFDAPVTFPSVSAIVVGFISGIVYAVAKIKQSAKPKTGVLPMSNPPVSASSQSMRDSLRS</sequence>